<protein>
    <recommendedName>
        <fullName evidence="5">Transcription repressor OFP8</fullName>
    </recommendedName>
    <alternativeName>
        <fullName evidence="4">OVATE family protein 8</fullName>
        <shortName evidence="4">OsOFP8</shortName>
    </alternativeName>
</protein>
<gene>
    <name evidence="4" type="primary">OFP8</name>
    <name evidence="7" type="ordered locus">Os01g0864000</name>
    <name evidence="5" type="ordered locus">LOC_Os01g64430</name>
    <name evidence="8" type="ORF">OsJ_04171</name>
    <name evidence="6" type="ORF">P0423B08.30</name>
</gene>
<organism>
    <name type="scientific">Oryza sativa subsp. japonica</name>
    <name type="common">Rice</name>
    <dbReference type="NCBI Taxonomy" id="39947"/>
    <lineage>
        <taxon>Eukaryota</taxon>
        <taxon>Viridiplantae</taxon>
        <taxon>Streptophyta</taxon>
        <taxon>Embryophyta</taxon>
        <taxon>Tracheophyta</taxon>
        <taxon>Spermatophyta</taxon>
        <taxon>Magnoliopsida</taxon>
        <taxon>Liliopsida</taxon>
        <taxon>Poales</taxon>
        <taxon>Poaceae</taxon>
        <taxon>BOP clade</taxon>
        <taxon>Oryzoideae</taxon>
        <taxon>Oryzeae</taxon>
        <taxon>Oryzinae</taxon>
        <taxon>Oryza</taxon>
        <taxon>Oryza sativa</taxon>
    </lineage>
</organism>
<sequence>MSGRSSRRGSFSLRQPPVVDIGCNCRRPKLFSIFSSSSSSSFRRGGSKPKSPNASSTSTTTAFTATTGGAGTATSTDSSWGPASFTTNSLFEEPAAAQQEQEQLETRRRRRQQRRRRRRAGATSFARGGDVGGHDDEQQQLQEQAPYRRVAKESVAVAVESAEPYEDFRESMVQMVVEKEIYAWDDLNDLLHQFLSLNSPRHHPLILHAFADLWTRNGLFSPPSPCQF</sequence>
<feature type="chain" id="PRO_0000439017" description="Transcription repressor OFP8">
    <location>
        <begin position="1"/>
        <end position="228"/>
    </location>
</feature>
<feature type="domain" description="OVATE" evidence="1">
    <location>
        <begin position="157"/>
        <end position="216"/>
    </location>
</feature>
<feature type="region of interest" description="Disordered" evidence="2">
    <location>
        <begin position="1"/>
        <end position="21"/>
    </location>
</feature>
<feature type="region of interest" description="Disordered" evidence="2">
    <location>
        <begin position="36"/>
        <end position="143"/>
    </location>
</feature>
<feature type="compositionally biased region" description="Low complexity" evidence="2">
    <location>
        <begin position="1"/>
        <end position="14"/>
    </location>
</feature>
<feature type="compositionally biased region" description="Low complexity" evidence="2">
    <location>
        <begin position="54"/>
        <end position="79"/>
    </location>
</feature>
<feature type="compositionally biased region" description="Low complexity" evidence="2">
    <location>
        <begin position="92"/>
        <end position="101"/>
    </location>
</feature>
<feature type="compositionally biased region" description="Basic residues" evidence="2">
    <location>
        <begin position="107"/>
        <end position="120"/>
    </location>
</feature>
<dbReference type="EMBL" id="AP003611">
    <property type="protein sequence ID" value="BAB63811.1"/>
    <property type="molecule type" value="Genomic_DNA"/>
</dbReference>
<dbReference type="EMBL" id="AP008207">
    <property type="protein sequence ID" value="BAF06805.1"/>
    <property type="status" value="ALT_SEQ"/>
    <property type="molecule type" value="Genomic_DNA"/>
</dbReference>
<dbReference type="EMBL" id="AP014957">
    <property type="protein sequence ID" value="BAS75362.1"/>
    <property type="molecule type" value="Genomic_DNA"/>
</dbReference>
<dbReference type="EMBL" id="CM000138">
    <property type="protein sequence ID" value="EAZ14247.1"/>
    <property type="molecule type" value="Genomic_DNA"/>
</dbReference>
<dbReference type="EMBL" id="AK106759">
    <property type="protein sequence ID" value="BAG97821.1"/>
    <property type="molecule type" value="mRNA"/>
</dbReference>
<dbReference type="RefSeq" id="XP_015643359.1">
    <property type="nucleotide sequence ID" value="XM_015787873.1"/>
</dbReference>
<dbReference type="SMR" id="Q94CV1"/>
<dbReference type="FunCoup" id="Q94CV1">
    <property type="interactions" value="177"/>
</dbReference>
<dbReference type="STRING" id="39947.Q94CV1"/>
<dbReference type="PaxDb" id="39947-Q94CV1"/>
<dbReference type="EnsemblPlants" id="Os01t0864000-01">
    <property type="protein sequence ID" value="Os01t0864000-01"/>
    <property type="gene ID" value="Os01g0864000"/>
</dbReference>
<dbReference type="Gramene" id="Os01t0864000-01">
    <property type="protein sequence ID" value="Os01t0864000-01"/>
    <property type="gene ID" value="Os01g0864000"/>
</dbReference>
<dbReference type="KEGG" id="dosa:Os01g0864000"/>
<dbReference type="eggNOG" id="ENOG502S0X5">
    <property type="taxonomic scope" value="Eukaryota"/>
</dbReference>
<dbReference type="HOGENOM" id="CLU_061898_2_0_1"/>
<dbReference type="InParanoid" id="Q94CV1"/>
<dbReference type="OMA" id="ISPENHY"/>
<dbReference type="OrthoDB" id="1928390at2759"/>
<dbReference type="Proteomes" id="UP000000763">
    <property type="component" value="Chromosome 1"/>
</dbReference>
<dbReference type="Proteomes" id="UP000007752">
    <property type="component" value="Chromosome 1"/>
</dbReference>
<dbReference type="Proteomes" id="UP000059680">
    <property type="component" value="Chromosome 1"/>
</dbReference>
<dbReference type="GO" id="GO:0005737">
    <property type="term" value="C:cytoplasm"/>
    <property type="evidence" value="ECO:0000314"/>
    <property type="project" value="UniProtKB"/>
</dbReference>
<dbReference type="GO" id="GO:0005634">
    <property type="term" value="C:nucleus"/>
    <property type="evidence" value="ECO:0000314"/>
    <property type="project" value="UniProtKB"/>
</dbReference>
<dbReference type="GO" id="GO:0009742">
    <property type="term" value="P:brassinosteroid mediated signaling pathway"/>
    <property type="evidence" value="ECO:0007669"/>
    <property type="project" value="UniProtKB-KW"/>
</dbReference>
<dbReference type="GO" id="GO:0045892">
    <property type="term" value="P:negative regulation of DNA-templated transcription"/>
    <property type="evidence" value="ECO:0007669"/>
    <property type="project" value="InterPro"/>
</dbReference>
<dbReference type="GO" id="GO:1900457">
    <property type="term" value="P:regulation of brassinosteroid mediated signaling pathway"/>
    <property type="evidence" value="ECO:0000315"/>
    <property type="project" value="UniProtKB"/>
</dbReference>
<dbReference type="InterPro" id="IPR038933">
    <property type="entry name" value="Ovate"/>
</dbReference>
<dbReference type="InterPro" id="IPR006458">
    <property type="entry name" value="Ovate_C"/>
</dbReference>
<dbReference type="NCBIfam" id="TIGR01568">
    <property type="entry name" value="A_thal_3678"/>
    <property type="match status" value="1"/>
</dbReference>
<dbReference type="PANTHER" id="PTHR33057">
    <property type="entry name" value="TRANSCRIPTION REPRESSOR OFP7-RELATED"/>
    <property type="match status" value="1"/>
</dbReference>
<dbReference type="PANTHER" id="PTHR33057:SF228">
    <property type="entry name" value="TRANSCRIPTION REPRESSOR OFP8"/>
    <property type="match status" value="1"/>
</dbReference>
<dbReference type="Pfam" id="PF04844">
    <property type="entry name" value="Ovate"/>
    <property type="match status" value="1"/>
</dbReference>
<dbReference type="PROSITE" id="PS51754">
    <property type="entry name" value="OVATE"/>
    <property type="match status" value="1"/>
</dbReference>
<evidence type="ECO:0000255" key="1">
    <source>
        <dbReference type="PROSITE-ProRule" id="PRU01090"/>
    </source>
</evidence>
<evidence type="ECO:0000256" key="2">
    <source>
        <dbReference type="SAM" id="MobiDB-lite"/>
    </source>
</evidence>
<evidence type="ECO:0000269" key="3">
    <source>
    </source>
</evidence>
<evidence type="ECO:0000303" key="4">
    <source>
    </source>
</evidence>
<evidence type="ECO:0000305" key="5"/>
<evidence type="ECO:0000312" key="6">
    <source>
        <dbReference type="EMBL" id="BAB63811.1"/>
    </source>
</evidence>
<evidence type="ECO:0000312" key="7">
    <source>
        <dbReference type="EMBL" id="BAS75362.1"/>
    </source>
</evidence>
<evidence type="ECO:0000312" key="8">
    <source>
        <dbReference type="EMBL" id="EAZ14247.1"/>
    </source>
</evidence>
<accession>Q94CV1</accession>
<accession>Q0JHH3</accession>
<reference key="1">
    <citation type="journal article" date="2002" name="Nature">
        <title>The genome sequence and structure of rice chromosome 1.</title>
        <authorList>
            <person name="Sasaki T."/>
            <person name="Matsumoto T."/>
            <person name="Yamamoto K."/>
            <person name="Sakata K."/>
            <person name="Baba T."/>
            <person name="Katayose Y."/>
            <person name="Wu J."/>
            <person name="Niimura Y."/>
            <person name="Cheng Z."/>
            <person name="Nagamura Y."/>
            <person name="Antonio B.A."/>
            <person name="Kanamori H."/>
            <person name="Hosokawa S."/>
            <person name="Masukawa M."/>
            <person name="Arikawa K."/>
            <person name="Chiden Y."/>
            <person name="Hayashi M."/>
            <person name="Okamoto M."/>
            <person name="Ando T."/>
            <person name="Aoki H."/>
            <person name="Arita K."/>
            <person name="Hamada M."/>
            <person name="Harada C."/>
            <person name="Hijishita S."/>
            <person name="Honda M."/>
            <person name="Ichikawa Y."/>
            <person name="Idonuma A."/>
            <person name="Iijima M."/>
            <person name="Ikeda M."/>
            <person name="Ikeno M."/>
            <person name="Ito S."/>
            <person name="Ito T."/>
            <person name="Ito Y."/>
            <person name="Ito Y."/>
            <person name="Iwabuchi A."/>
            <person name="Kamiya K."/>
            <person name="Karasawa W."/>
            <person name="Katagiri S."/>
            <person name="Kikuta A."/>
            <person name="Kobayashi N."/>
            <person name="Kono I."/>
            <person name="Machita K."/>
            <person name="Maehara T."/>
            <person name="Mizuno H."/>
            <person name="Mizubayashi T."/>
            <person name="Mukai Y."/>
            <person name="Nagasaki H."/>
            <person name="Nakashima M."/>
            <person name="Nakama Y."/>
            <person name="Nakamichi Y."/>
            <person name="Nakamura M."/>
            <person name="Namiki N."/>
            <person name="Negishi M."/>
            <person name="Ohta I."/>
            <person name="Ono N."/>
            <person name="Saji S."/>
            <person name="Sakai K."/>
            <person name="Shibata M."/>
            <person name="Shimokawa T."/>
            <person name="Shomura A."/>
            <person name="Song J."/>
            <person name="Takazaki Y."/>
            <person name="Terasawa K."/>
            <person name="Tsuji K."/>
            <person name="Waki K."/>
            <person name="Yamagata H."/>
            <person name="Yamane H."/>
            <person name="Yoshiki S."/>
            <person name="Yoshihara R."/>
            <person name="Yukawa K."/>
            <person name="Zhong H."/>
            <person name="Iwama H."/>
            <person name="Endo T."/>
            <person name="Ito H."/>
            <person name="Hahn J.H."/>
            <person name="Kim H.-I."/>
            <person name="Eun M.-Y."/>
            <person name="Yano M."/>
            <person name="Jiang J."/>
            <person name="Gojobori T."/>
        </authorList>
    </citation>
    <scope>NUCLEOTIDE SEQUENCE [LARGE SCALE GENOMIC DNA]</scope>
    <source>
        <strain>cv. Nipponbare</strain>
    </source>
</reference>
<reference key="2">
    <citation type="journal article" date="2005" name="Nature">
        <title>The map-based sequence of the rice genome.</title>
        <authorList>
            <consortium name="International rice genome sequencing project (IRGSP)"/>
        </authorList>
    </citation>
    <scope>NUCLEOTIDE SEQUENCE [LARGE SCALE GENOMIC DNA]</scope>
    <source>
        <strain>cv. Nipponbare</strain>
    </source>
</reference>
<reference key="3">
    <citation type="journal article" date="2008" name="Nucleic Acids Res.">
        <title>The rice annotation project database (RAP-DB): 2008 update.</title>
        <authorList>
            <consortium name="The rice annotation project (RAP)"/>
        </authorList>
    </citation>
    <scope>GENOME REANNOTATION</scope>
    <source>
        <strain>cv. Nipponbare</strain>
    </source>
</reference>
<reference key="4">
    <citation type="journal article" date="2013" name="Rice">
        <title>Improvement of the Oryza sativa Nipponbare reference genome using next generation sequence and optical map data.</title>
        <authorList>
            <person name="Kawahara Y."/>
            <person name="de la Bastide M."/>
            <person name="Hamilton J.P."/>
            <person name="Kanamori H."/>
            <person name="McCombie W.R."/>
            <person name="Ouyang S."/>
            <person name="Schwartz D.C."/>
            <person name="Tanaka T."/>
            <person name="Wu J."/>
            <person name="Zhou S."/>
            <person name="Childs K.L."/>
            <person name="Davidson R.M."/>
            <person name="Lin H."/>
            <person name="Quesada-Ocampo L."/>
            <person name="Vaillancourt B."/>
            <person name="Sakai H."/>
            <person name="Lee S.S."/>
            <person name="Kim J."/>
            <person name="Numa H."/>
            <person name="Itoh T."/>
            <person name="Buell C.R."/>
            <person name="Matsumoto T."/>
        </authorList>
    </citation>
    <scope>GENOME REANNOTATION</scope>
    <source>
        <strain>cv. Nipponbare</strain>
    </source>
</reference>
<reference key="5">
    <citation type="journal article" date="2005" name="PLoS Biol.">
        <title>The genomes of Oryza sativa: a history of duplications.</title>
        <authorList>
            <person name="Yu J."/>
            <person name="Wang J."/>
            <person name="Lin W."/>
            <person name="Li S."/>
            <person name="Li H."/>
            <person name="Zhou J."/>
            <person name="Ni P."/>
            <person name="Dong W."/>
            <person name="Hu S."/>
            <person name="Zeng C."/>
            <person name="Zhang J."/>
            <person name="Zhang Y."/>
            <person name="Li R."/>
            <person name="Xu Z."/>
            <person name="Li S."/>
            <person name="Li X."/>
            <person name="Zheng H."/>
            <person name="Cong L."/>
            <person name="Lin L."/>
            <person name="Yin J."/>
            <person name="Geng J."/>
            <person name="Li G."/>
            <person name="Shi J."/>
            <person name="Liu J."/>
            <person name="Lv H."/>
            <person name="Li J."/>
            <person name="Wang J."/>
            <person name="Deng Y."/>
            <person name="Ran L."/>
            <person name="Shi X."/>
            <person name="Wang X."/>
            <person name="Wu Q."/>
            <person name="Li C."/>
            <person name="Ren X."/>
            <person name="Wang J."/>
            <person name="Wang X."/>
            <person name="Li D."/>
            <person name="Liu D."/>
            <person name="Zhang X."/>
            <person name="Ji Z."/>
            <person name="Zhao W."/>
            <person name="Sun Y."/>
            <person name="Zhang Z."/>
            <person name="Bao J."/>
            <person name="Han Y."/>
            <person name="Dong L."/>
            <person name="Ji J."/>
            <person name="Chen P."/>
            <person name="Wu S."/>
            <person name="Liu J."/>
            <person name="Xiao Y."/>
            <person name="Bu D."/>
            <person name="Tan J."/>
            <person name="Yang L."/>
            <person name="Ye C."/>
            <person name="Zhang J."/>
            <person name="Xu J."/>
            <person name="Zhou Y."/>
            <person name="Yu Y."/>
            <person name="Zhang B."/>
            <person name="Zhuang S."/>
            <person name="Wei H."/>
            <person name="Liu B."/>
            <person name="Lei M."/>
            <person name="Yu H."/>
            <person name="Li Y."/>
            <person name="Xu H."/>
            <person name="Wei S."/>
            <person name="He X."/>
            <person name="Fang L."/>
            <person name="Zhang Z."/>
            <person name="Zhang Y."/>
            <person name="Huang X."/>
            <person name="Su Z."/>
            <person name="Tong W."/>
            <person name="Li J."/>
            <person name="Tong Z."/>
            <person name="Li S."/>
            <person name="Ye J."/>
            <person name="Wang L."/>
            <person name="Fang L."/>
            <person name="Lei T."/>
            <person name="Chen C.-S."/>
            <person name="Chen H.-C."/>
            <person name="Xu Z."/>
            <person name="Li H."/>
            <person name="Huang H."/>
            <person name="Zhang F."/>
            <person name="Xu H."/>
            <person name="Li N."/>
            <person name="Zhao C."/>
            <person name="Li S."/>
            <person name="Dong L."/>
            <person name="Huang Y."/>
            <person name="Li L."/>
            <person name="Xi Y."/>
            <person name="Qi Q."/>
            <person name="Li W."/>
            <person name="Zhang B."/>
            <person name="Hu W."/>
            <person name="Zhang Y."/>
            <person name="Tian X."/>
            <person name="Jiao Y."/>
            <person name="Liang X."/>
            <person name="Jin J."/>
            <person name="Gao L."/>
            <person name="Zheng W."/>
            <person name="Hao B."/>
            <person name="Liu S.-M."/>
            <person name="Wang W."/>
            <person name="Yuan L."/>
            <person name="Cao M."/>
            <person name="McDermott J."/>
            <person name="Samudrala R."/>
            <person name="Wang J."/>
            <person name="Wong G.K.-S."/>
            <person name="Yang H."/>
        </authorList>
    </citation>
    <scope>NUCLEOTIDE SEQUENCE [LARGE SCALE GENOMIC DNA]</scope>
    <source>
        <strain>cv. Nipponbare</strain>
    </source>
</reference>
<reference key="6">
    <citation type="journal article" date="2003" name="Science">
        <title>Collection, mapping, and annotation of over 28,000 cDNA clones from japonica rice.</title>
        <authorList>
            <consortium name="The rice full-length cDNA consortium"/>
        </authorList>
    </citation>
    <scope>NUCLEOTIDE SEQUENCE [LARGE SCALE MRNA]</scope>
    <source>
        <strain>cv. Nipponbare</strain>
    </source>
</reference>
<reference key="7">
    <citation type="journal article" date="2016" name="PLoS Genet.">
        <title>OVATE family protein 8 positively mediates brassinosteroid signaling through interacting with the GSK3-like kinase in rice.</title>
        <authorList>
            <person name="Yang C."/>
            <person name="Shen W."/>
            <person name="He Y."/>
            <person name="Tian Z."/>
            <person name="Li J."/>
        </authorList>
    </citation>
    <scope>FUNCTION</scope>
    <scope>INTERACTION WITH GSK2</scope>
    <scope>SUBCELLULAR LOCATION</scope>
    <scope>TISSUE SPECIFICITY</scope>
    <scope>INDUCTION BY 24-EPIBRASSINOLIDE</scope>
    <scope>PHOSPHORYLATION</scope>
</reference>
<proteinExistence type="evidence at protein level"/>
<name>OFP8_ORYSJ</name>
<comment type="function">
    <text evidence="3">Probable transcriptional repressor that regulates multiple aspects of plant growth and development, partly through brassinosteroid (BR) signaling pathway. Acts downstream of the kinase GSK2, a negative regulator of BR signaling.</text>
</comment>
<comment type="subunit">
    <text evidence="3">Interacts with GSK2.</text>
</comment>
<comment type="subcellular location">
    <subcellularLocation>
        <location evidence="3">Nucleus</location>
    </subcellularLocation>
    <subcellularLocation>
        <location evidence="3">Cytoplasm</location>
    </subcellularLocation>
    <text evidence="3">Phosphorylated OFP8 shuttles from the nucleus to the cytoplasm where it is degraded by the proteasome.</text>
</comment>
<comment type="tissue specificity">
    <text evidence="3">Expressed in roots, stems, stem nodes, young leaves, leaf sheaths, lamina joints, young spikelets, inflorescences, stamens and ovaries, embryos and seeds.</text>
</comment>
<comment type="induction">
    <text evidence="3">Induced by 24-epibrassinolide.</text>
</comment>
<comment type="PTM">
    <text evidence="3">Phosphorylated on serine and threonine residues by GSK2. Dephosphorylated during response to brassinosteroid.</text>
</comment>
<comment type="miscellaneous">
    <text evidence="3">The gain-of-function mutant ofp8 (T-DNA tagging) shows an enhanced lamina joint inclination at the maturation stage. Plants silencing OFP8 have a marked upright leaf phenotype and are insensitive to brassinolide.</text>
</comment>
<comment type="sequence caution" evidence="5">
    <conflict type="erroneous gene model prediction">
        <sequence resource="EMBL-CDS" id="BAF06805"/>
    </conflict>
</comment>
<keyword id="KW-1070">Brassinosteroid signaling pathway</keyword>
<keyword id="KW-0963">Cytoplasm</keyword>
<keyword id="KW-0539">Nucleus</keyword>
<keyword id="KW-1185">Reference proteome</keyword>
<keyword id="KW-0678">Repressor</keyword>
<keyword id="KW-0804">Transcription</keyword>
<keyword id="KW-0805">Transcription regulation</keyword>